<evidence type="ECO:0000255" key="1">
    <source>
        <dbReference type="HAMAP-Rule" id="MF_00687"/>
    </source>
</evidence>
<reference key="1">
    <citation type="journal article" date="2000" name="Nucleic Acids Res.">
        <title>Complete genome sequence of the alkaliphilic bacterium Bacillus halodurans and genomic sequence comparison with Bacillus subtilis.</title>
        <authorList>
            <person name="Takami H."/>
            <person name="Nakasone K."/>
            <person name="Takaki Y."/>
            <person name="Maeno G."/>
            <person name="Sasaki R."/>
            <person name="Masui N."/>
            <person name="Fuji F."/>
            <person name="Hirama C."/>
            <person name="Nakamura Y."/>
            <person name="Ogasawara N."/>
            <person name="Kuhara S."/>
            <person name="Horikoshi K."/>
        </authorList>
    </citation>
    <scope>NUCLEOTIDE SEQUENCE [LARGE SCALE GENOMIC DNA]</scope>
    <source>
        <strain>ATCC BAA-125 / DSM 18197 / FERM 7344 / JCM 9153 / C-125</strain>
    </source>
</reference>
<protein>
    <recommendedName>
        <fullName evidence="1">4-deoxy-L-threo-5-hexosulose-uronate ketol-isomerase</fullName>
        <ecNumber evidence="1">5.3.1.17</ecNumber>
    </recommendedName>
    <alternativeName>
        <fullName evidence="1">5-keto-4-deoxyuronate isomerase</fullName>
    </alternativeName>
    <alternativeName>
        <fullName evidence="1">DKI isomerase</fullName>
    </alternativeName>
</protein>
<gene>
    <name evidence="1" type="primary">kduI</name>
    <name type="ordered locus">BH2166</name>
</gene>
<comment type="function">
    <text evidence="1">Catalyzes the isomerization of 5-dehydro-4-deoxy-D-glucuronate to 3-deoxy-D-glycero-2,5-hexodiulosonate.</text>
</comment>
<comment type="catalytic activity">
    <reaction evidence="1">
        <text>5-dehydro-4-deoxy-D-glucuronate = 3-deoxy-D-glycero-2,5-hexodiulosonate</text>
        <dbReference type="Rhea" id="RHEA:23896"/>
        <dbReference type="ChEBI" id="CHEBI:17117"/>
        <dbReference type="ChEBI" id="CHEBI:29071"/>
        <dbReference type="EC" id="5.3.1.17"/>
    </reaction>
</comment>
<comment type="cofactor">
    <cofactor evidence="1">
        <name>Zn(2+)</name>
        <dbReference type="ChEBI" id="CHEBI:29105"/>
    </cofactor>
    <text evidence="1">Binds 1 zinc ion per subunit.</text>
</comment>
<comment type="pathway">
    <text evidence="1">Glycan metabolism; pectin degradation; 2-dehydro-3-deoxy-D-gluconate from pectin: step 4/5.</text>
</comment>
<comment type="similarity">
    <text evidence="1">Belongs to the KduI family.</text>
</comment>
<name>KDUI_HALH5</name>
<keyword id="KW-0413">Isomerase</keyword>
<keyword id="KW-0479">Metal-binding</keyword>
<keyword id="KW-1185">Reference proteome</keyword>
<keyword id="KW-0862">Zinc</keyword>
<feature type="chain" id="PRO_0000215480" description="4-deoxy-L-threo-5-hexosulose-uronate ketol-isomerase">
    <location>
        <begin position="1"/>
        <end position="276"/>
    </location>
</feature>
<feature type="binding site" evidence="1">
    <location>
        <position position="194"/>
    </location>
    <ligand>
        <name>Zn(2+)</name>
        <dbReference type="ChEBI" id="CHEBI:29105"/>
    </ligand>
</feature>
<feature type="binding site" evidence="1">
    <location>
        <position position="196"/>
    </location>
    <ligand>
        <name>Zn(2+)</name>
        <dbReference type="ChEBI" id="CHEBI:29105"/>
    </ligand>
</feature>
<feature type="binding site" evidence="1">
    <location>
        <position position="201"/>
    </location>
    <ligand>
        <name>Zn(2+)</name>
        <dbReference type="ChEBI" id="CHEBI:29105"/>
    </ligand>
</feature>
<feature type="binding site" evidence="1">
    <location>
        <position position="243"/>
    </location>
    <ligand>
        <name>Zn(2+)</name>
        <dbReference type="ChEBI" id="CHEBI:29105"/>
    </ligand>
</feature>
<accession>Q9KAX0</accession>
<organism>
    <name type="scientific">Halalkalibacterium halodurans (strain ATCC BAA-125 / DSM 18197 / FERM 7344 / JCM 9153 / C-125)</name>
    <name type="common">Bacillus halodurans</name>
    <dbReference type="NCBI Taxonomy" id="272558"/>
    <lineage>
        <taxon>Bacteria</taxon>
        <taxon>Bacillati</taxon>
        <taxon>Bacillota</taxon>
        <taxon>Bacilli</taxon>
        <taxon>Bacillales</taxon>
        <taxon>Bacillaceae</taxon>
        <taxon>Halalkalibacterium (ex Joshi et al. 2022)</taxon>
    </lineage>
</organism>
<dbReference type="EC" id="5.3.1.17" evidence="1"/>
<dbReference type="EMBL" id="BA000004">
    <property type="protein sequence ID" value="BAB05885.1"/>
    <property type="molecule type" value="Genomic_DNA"/>
</dbReference>
<dbReference type="PIR" id="F83920">
    <property type="entry name" value="F83920"/>
</dbReference>
<dbReference type="RefSeq" id="WP_010898323.1">
    <property type="nucleotide sequence ID" value="NC_002570.2"/>
</dbReference>
<dbReference type="SMR" id="Q9KAX0"/>
<dbReference type="STRING" id="272558.gene:10728064"/>
<dbReference type="GeneID" id="87597712"/>
<dbReference type="KEGG" id="bha:BH2166"/>
<dbReference type="eggNOG" id="COG3717">
    <property type="taxonomic scope" value="Bacteria"/>
</dbReference>
<dbReference type="HOGENOM" id="CLU_062609_0_0_9"/>
<dbReference type="OrthoDB" id="9770644at2"/>
<dbReference type="UniPathway" id="UPA00545">
    <property type="reaction ID" value="UER00826"/>
</dbReference>
<dbReference type="Proteomes" id="UP000001258">
    <property type="component" value="Chromosome"/>
</dbReference>
<dbReference type="GO" id="GO:0008697">
    <property type="term" value="F:4-deoxy-L-threo-5-hexosulose-uronate ketol-isomerase activity"/>
    <property type="evidence" value="ECO:0007669"/>
    <property type="project" value="UniProtKB-UniRule"/>
</dbReference>
<dbReference type="GO" id="GO:0008270">
    <property type="term" value="F:zinc ion binding"/>
    <property type="evidence" value="ECO:0007669"/>
    <property type="project" value="UniProtKB-UniRule"/>
</dbReference>
<dbReference type="GO" id="GO:0019698">
    <property type="term" value="P:D-galacturonate catabolic process"/>
    <property type="evidence" value="ECO:0007669"/>
    <property type="project" value="TreeGrafter"/>
</dbReference>
<dbReference type="GO" id="GO:0042840">
    <property type="term" value="P:D-glucuronate catabolic process"/>
    <property type="evidence" value="ECO:0007669"/>
    <property type="project" value="TreeGrafter"/>
</dbReference>
<dbReference type="GO" id="GO:0045490">
    <property type="term" value="P:pectin catabolic process"/>
    <property type="evidence" value="ECO:0007669"/>
    <property type="project" value="UniProtKB-UniRule"/>
</dbReference>
<dbReference type="CDD" id="cd20491">
    <property type="entry name" value="cupin_KduI_C"/>
    <property type="match status" value="1"/>
</dbReference>
<dbReference type="CDD" id="cd20294">
    <property type="entry name" value="cupin_KduI_N"/>
    <property type="match status" value="1"/>
</dbReference>
<dbReference type="Gene3D" id="2.60.120.10">
    <property type="entry name" value="Jelly Rolls"/>
    <property type="match status" value="1"/>
</dbReference>
<dbReference type="Gene3D" id="2.60.120.520">
    <property type="entry name" value="pectin degrading enzyme 5-keto 4- deoxyuronate isomerase, domain 1"/>
    <property type="match status" value="1"/>
</dbReference>
<dbReference type="HAMAP" id="MF_00687">
    <property type="entry name" value="KduI"/>
    <property type="match status" value="1"/>
</dbReference>
<dbReference type="InterPro" id="IPR007045">
    <property type="entry name" value="KduI"/>
</dbReference>
<dbReference type="InterPro" id="IPR021120">
    <property type="entry name" value="KduI/IolB_isomerase"/>
</dbReference>
<dbReference type="InterPro" id="IPR027449">
    <property type="entry name" value="KduI_N"/>
</dbReference>
<dbReference type="InterPro" id="IPR014710">
    <property type="entry name" value="RmlC-like_jellyroll"/>
</dbReference>
<dbReference type="InterPro" id="IPR011051">
    <property type="entry name" value="RmlC_Cupin_sf"/>
</dbReference>
<dbReference type="NCBIfam" id="NF002091">
    <property type="entry name" value="PRK00924.1"/>
    <property type="match status" value="1"/>
</dbReference>
<dbReference type="PANTHER" id="PTHR38461">
    <property type="entry name" value="4-DEOXY-L-THREO-5-HEXOSULOSE-URONATE KETOL-ISOMERASE"/>
    <property type="match status" value="1"/>
</dbReference>
<dbReference type="PANTHER" id="PTHR38461:SF1">
    <property type="entry name" value="4-DEOXY-L-THREO-5-HEXOSULOSE-URONATE KETOL-ISOMERASE"/>
    <property type="match status" value="1"/>
</dbReference>
<dbReference type="Pfam" id="PF04962">
    <property type="entry name" value="KduI"/>
    <property type="match status" value="1"/>
</dbReference>
<dbReference type="PIRSF" id="PIRSF006625">
    <property type="entry name" value="KduI"/>
    <property type="match status" value="1"/>
</dbReference>
<dbReference type="SUPFAM" id="SSF51182">
    <property type="entry name" value="RmlC-like cupins"/>
    <property type="match status" value="1"/>
</dbReference>
<sequence>MENRYATSPEDVKRYTTDKLRQEFLVESLFTPGEIQMVYTHFDRTVIGGAIPMKEPLALDAGDFLKTDYFLERREVGIINIGPKGKVIVDGDEYTLNKRDCLYIGLGKRDVSFHSEDSSNPARFYFVSALAHHEYPTKVLPIEEAVPTKLGSDAESNNRTIYKYIHSEGIQSCQLMMGMTLLEPNNMWNTMPAHIHDRRNEVYLYFDMEDDSRVFHFMGQPHETRHLVVKNEQAVISPPWSIHSGVGTANYTFIWAMAGENYTFTDMEFIKMEDLR</sequence>
<proteinExistence type="inferred from homology"/>